<organism>
    <name type="scientific">Tibrogargan virus (strain CS132)</name>
    <name type="common">TIBV</name>
    <dbReference type="NCBI Taxonomy" id="1559361"/>
    <lineage>
        <taxon>Viruses</taxon>
        <taxon>Riboviria</taxon>
        <taxon>Orthornavirae</taxon>
        <taxon>Negarnaviricota</taxon>
        <taxon>Haploviricotina</taxon>
        <taxon>Monjiviricetes</taxon>
        <taxon>Mononegavirales</taxon>
        <taxon>Rhabdoviridae</taxon>
        <taxon>Alpharhabdovirinae</taxon>
        <taxon>Tibrovirus</taxon>
        <taxon>Tibrovirus tibrogargan</taxon>
    </lineage>
</organism>
<proteinExistence type="inferred from homology"/>
<organismHost>
    <name type="scientific">Bos taurus</name>
    <name type="common">Bovine</name>
    <dbReference type="NCBI Taxonomy" id="9913"/>
</organismHost>
<organismHost>
    <name type="scientific">Culicoides brevitarsis</name>
    <dbReference type="NCBI Taxonomy" id="469753"/>
</organismHost>
<sequence length="428" mass="48688">MHCLVTSTSIKLTAPSDTIDVQYCSDYFEKNNKQKPKINLPKLPVGLAELRALVKGGFKANDLKLQHVLAYLGHLLQDIKGELTEDWTSFGVLIGNRSHNITPLDLLDVNYYDDKLLDGVKANDASQSDDAWMLFACLGIYRLARTQNLQHRSSILMKMNAQILSLNQNAIKLVDNTMFYNSWISNYNYTKLIAACDMFFYKFKDHEHAVCRFGTIPSRWKDCGGLTSLSHLKNLTGMELEEIVSWVFVPSIGKEICRMMKSGQELDKPDSYVPYMMDLGLSMKSPYSSSANGGTYTWIHMIGSIMHSQRSLHARMVNENELPNIRISAMLTAYVKFNKGSLMKVFVKEEDKHLYIGEDQDENEGNGSDYIDLTQHPNTDSADDWYQWLEINNFTLDDIIKDSITRECKKIQNTRAGTIGSYIQTTLS</sequence>
<accession>D8V070</accession>
<protein>
    <recommendedName>
        <fullName>Nucleoprotein</fullName>
        <shortName>NP</shortName>
    </recommendedName>
    <alternativeName>
        <fullName>Nucleocapsid protein</fullName>
        <shortName>Protein N</shortName>
    </alternativeName>
</protein>
<name>NCAP_TIBVC</name>
<keyword id="KW-0167">Capsid protein</keyword>
<keyword id="KW-1139">Helical capsid protein</keyword>
<keyword id="KW-1035">Host cytoplasm</keyword>
<keyword id="KW-1185">Reference proteome</keyword>
<keyword id="KW-0687">Ribonucleoprotein</keyword>
<keyword id="KW-0694">RNA-binding</keyword>
<keyword id="KW-0543">Viral nucleoprotein</keyword>
<keyword id="KW-0693">Viral RNA replication</keyword>
<keyword id="KW-0946">Virion</keyword>
<feature type="chain" id="PRO_0000432066" description="Nucleoprotein">
    <location>
        <begin position="1"/>
        <end position="428"/>
    </location>
</feature>
<reference key="1">
    <citation type="journal article" date="2011" name="J. Gen. Virol.">
        <title>Tibrogargan and Coastal Plains rhabdoviruses: genomic characterization, evolution of novel genes and seroprevalence in Australian livestock.</title>
        <authorList>
            <person name="Gubala A."/>
            <person name="Davis S."/>
            <person name="Weir R."/>
            <person name="Melville L."/>
            <person name="Cowled C."/>
            <person name="Boyle D."/>
        </authorList>
    </citation>
    <scope>NUCLEOTIDE SEQUENCE [GENOMIC RNA]</scope>
    <source>
        <strain>CS132</strain>
    </source>
</reference>
<dbReference type="EMBL" id="GQ294472">
    <property type="protein sequence ID" value="ADG86347.1"/>
    <property type="molecule type" value="Viral_cRNA"/>
</dbReference>
<dbReference type="RefSeq" id="YP_007641368.1">
    <property type="nucleotide sequence ID" value="NC_020804.1"/>
</dbReference>
<dbReference type="SMR" id="D8V070"/>
<dbReference type="GeneID" id="14857906"/>
<dbReference type="KEGG" id="vg:14857906"/>
<dbReference type="Proteomes" id="UP000029770">
    <property type="component" value="Segment"/>
</dbReference>
<dbReference type="GO" id="GO:0019029">
    <property type="term" value="C:helical viral capsid"/>
    <property type="evidence" value="ECO:0007669"/>
    <property type="project" value="UniProtKB-KW"/>
</dbReference>
<dbReference type="GO" id="GO:0030430">
    <property type="term" value="C:host cell cytoplasm"/>
    <property type="evidence" value="ECO:0007669"/>
    <property type="project" value="UniProtKB-SubCell"/>
</dbReference>
<dbReference type="GO" id="GO:1990904">
    <property type="term" value="C:ribonucleoprotein complex"/>
    <property type="evidence" value="ECO:0007669"/>
    <property type="project" value="UniProtKB-KW"/>
</dbReference>
<dbReference type="GO" id="GO:0019013">
    <property type="term" value="C:viral nucleocapsid"/>
    <property type="evidence" value="ECO:0007669"/>
    <property type="project" value="UniProtKB-KW"/>
</dbReference>
<dbReference type="GO" id="GO:0003723">
    <property type="term" value="F:RNA binding"/>
    <property type="evidence" value="ECO:0007669"/>
    <property type="project" value="UniProtKB-KW"/>
</dbReference>
<dbReference type="Gene3D" id="1.10.3610.10">
    <property type="entry name" value="Nucleoprotein"/>
    <property type="match status" value="1"/>
</dbReference>
<dbReference type="Gene3D" id="1.10.3570.10">
    <property type="entry name" value="Rhabdovirus nucleocapsid protein like domain"/>
    <property type="match status" value="1"/>
</dbReference>
<dbReference type="InterPro" id="IPR000448">
    <property type="entry name" value="Rhabdo_ncapsid"/>
</dbReference>
<dbReference type="InterPro" id="IPR023331">
    <property type="entry name" value="Rhabdovirus_ncapsid_C"/>
</dbReference>
<dbReference type="InterPro" id="IPR023330">
    <property type="entry name" value="Rhabdovirus_ncapsid_N"/>
</dbReference>
<dbReference type="InterPro" id="IPR035961">
    <property type="entry name" value="Rhabdovirus_nucleoprotein-like"/>
</dbReference>
<dbReference type="Pfam" id="PF00945">
    <property type="entry name" value="Rhabdo_ncap"/>
    <property type="match status" value="1"/>
</dbReference>
<dbReference type="SUPFAM" id="SSF140809">
    <property type="entry name" value="Rhabdovirus nucleoprotein-like"/>
    <property type="match status" value="1"/>
</dbReference>
<gene>
    <name type="primary">N</name>
</gene>
<evidence type="ECO:0000250" key="1">
    <source>
        <dbReference type="UniProtKB" id="P03521"/>
    </source>
</evidence>
<comment type="function">
    <text evidence="1">Encapsidates the genome, protecting it from nucleases. The encapsidated genomic RNA is termed the NC and serves as template for transcription and replication. Nucleocapsid assembly is concomitant with replication, therefore viral replication depends on the intracellular concentration of free N, termed N(0). All replicative products are resistant to nucleases.</text>
</comment>
<comment type="subunit">
    <text evidence="1">Homomultimerizes to form the nucleocapsid. Binds to viral genomic RNA. N in nucleocapsid binds the P protein and thereby positions the polymerase on the template. Interaction of N(0) with the P protein prevents the uncontrolled aggregation of N(0).</text>
</comment>
<comment type="subcellular location">
    <subcellularLocation>
        <location>Virion</location>
    </subcellularLocation>
    <subcellularLocation>
        <location>Host cytoplasm</location>
    </subcellularLocation>
    <text evidence="1">The nucleocapsid is synthesized in the cytoplasm, and is subsequently transported via microtubules to the cell periphery.</text>
</comment>